<keyword id="KW-0002">3D-structure</keyword>
<keyword id="KW-0025">Alternative splicing</keyword>
<keyword id="KW-0963">Cytoplasm</keyword>
<keyword id="KW-0221">Differentiation</keyword>
<keyword id="KW-0539">Nucleus</keyword>
<keyword id="KW-1185">Reference proteome</keyword>
<keyword id="KW-0677">Repeat</keyword>
<keyword id="KW-0694">RNA-binding</keyword>
<keyword id="KW-0726">Sexual differentiation</keyword>
<keyword id="KW-0804">Transcription</keyword>
<keyword id="KW-0805">Transcription regulation</keyword>
<evidence type="ECO:0000255" key="1">
    <source>
        <dbReference type="PROSITE-ProRule" id="PRU00176"/>
    </source>
</evidence>
<evidence type="ECO:0000256" key="2">
    <source>
        <dbReference type="SAM" id="MobiDB-lite"/>
    </source>
</evidence>
<evidence type="ECO:0000269" key="3">
    <source>
    </source>
</evidence>
<evidence type="ECO:0000269" key="4">
    <source>
    </source>
</evidence>
<evidence type="ECO:0000269" key="5">
    <source>
    </source>
</evidence>
<evidence type="ECO:0000269" key="6">
    <source>
    </source>
</evidence>
<evidence type="ECO:0000269" key="7">
    <source>
    </source>
</evidence>
<evidence type="ECO:0000269" key="8">
    <source>
    </source>
</evidence>
<evidence type="ECO:0000269" key="9">
    <source>
    </source>
</evidence>
<evidence type="ECO:0000269" key="10">
    <source>
    </source>
</evidence>
<evidence type="ECO:0000269" key="11">
    <source>
    </source>
</evidence>
<evidence type="ECO:0000269" key="12">
    <source>
    </source>
</evidence>
<evidence type="ECO:0000269" key="13">
    <source>
    </source>
</evidence>
<evidence type="ECO:0000269" key="14">
    <source>
    </source>
</evidence>
<evidence type="ECO:0000269" key="15">
    <source>
    </source>
</evidence>
<evidence type="ECO:0000269" key="16">
    <source>
    </source>
</evidence>
<evidence type="ECO:0000269" key="17">
    <source>
    </source>
</evidence>
<evidence type="ECO:0000269" key="18">
    <source>
    </source>
</evidence>
<evidence type="ECO:0000269" key="19">
    <source>
    </source>
</evidence>
<evidence type="ECO:0000269" key="20">
    <source>
    </source>
</evidence>
<evidence type="ECO:0000269" key="21">
    <source>
    </source>
</evidence>
<evidence type="ECO:0000269" key="22">
    <source>
    </source>
</evidence>
<evidence type="ECO:0000269" key="23">
    <source>
    </source>
</evidence>
<evidence type="ECO:0000269" key="24">
    <source>
    </source>
</evidence>
<evidence type="ECO:0000269" key="25">
    <source>
    </source>
</evidence>
<evidence type="ECO:0000269" key="26">
    <source>
    </source>
</evidence>
<evidence type="ECO:0000303" key="27">
    <source>
    </source>
</evidence>
<evidence type="ECO:0000303" key="28">
    <source>
    </source>
</evidence>
<evidence type="ECO:0000303" key="29">
    <source ref="5"/>
</evidence>
<evidence type="ECO:0000305" key="30"/>
<evidence type="ECO:0000312" key="31">
    <source>
        <dbReference type="FlyBase" id="FBgn0264270"/>
    </source>
</evidence>
<evidence type="ECO:0000312" key="32">
    <source>
        <dbReference type="Proteomes" id="UP000000803"/>
    </source>
</evidence>
<evidence type="ECO:0007744" key="33">
    <source>
        <dbReference type="PDB" id="4QQB"/>
    </source>
</evidence>
<evidence type="ECO:0007829" key="34">
    <source>
        <dbReference type="PDB" id="1B7F"/>
    </source>
</evidence>
<evidence type="ECO:0007829" key="35">
    <source>
        <dbReference type="PDB" id="4QQB"/>
    </source>
</evidence>
<sequence>MYGNNNPGSNNNNGGYPPYGYNNKSSGGRGFGMSHSLPSGMSRYAFSPQDTEFSFPSSSSRRGYNDFPGCGGSGGNGGSANNLGGGNMCHLPPMASNNSLNNLCGLSLGSGGSDDLMNDPRASNTNLIVNYLPQDMTDRELYALFRAIGPINTCRIMRDYKTGYSFGYAFVDFTSEMDSQRAIKVLNGITVRNKRLKVSYARPGGESIKDTNLYVTNLPRTITDDQLDTIFGKYGSIVQKNILRDKLTGRPRGVAFVRYNKREEAQEAISALNNVIPEGGSQPLSVRLAEEHGKAKAAHFMSQMGVVPANVPPPPPQPPAHMAAAFNMMHRGRSIKSQQRFQNSHPYFDAKKFI</sequence>
<organism evidence="32">
    <name type="scientific">Drosophila melanogaster</name>
    <name type="common">Fruit fly</name>
    <dbReference type="NCBI Taxonomy" id="7227"/>
    <lineage>
        <taxon>Eukaryota</taxon>
        <taxon>Metazoa</taxon>
        <taxon>Ecdysozoa</taxon>
        <taxon>Arthropoda</taxon>
        <taxon>Hexapoda</taxon>
        <taxon>Insecta</taxon>
        <taxon>Pterygota</taxon>
        <taxon>Neoptera</taxon>
        <taxon>Endopterygota</taxon>
        <taxon>Diptera</taxon>
        <taxon>Brachycera</taxon>
        <taxon>Muscomorpha</taxon>
        <taxon>Ephydroidea</taxon>
        <taxon>Drosophilidae</taxon>
        <taxon>Drosophila</taxon>
        <taxon>Sophophora</taxon>
    </lineage>
</organism>
<protein>
    <recommendedName>
        <fullName evidence="28">Protein sex-lethal</fullName>
    </recommendedName>
</protein>
<feature type="chain" id="PRO_0000081967" description="Protein sex-lethal">
    <location>
        <begin position="1"/>
        <end position="354"/>
    </location>
</feature>
<feature type="domain" description="RRM 1" evidence="1">
    <location>
        <begin position="125"/>
        <end position="203"/>
    </location>
</feature>
<feature type="domain" description="RRM 2" evidence="1">
    <location>
        <begin position="211"/>
        <end position="291"/>
    </location>
</feature>
<feature type="region of interest" description="Disordered" evidence="2">
    <location>
        <begin position="1"/>
        <end position="21"/>
    </location>
</feature>
<feature type="splice variant" id="VSP_019287" description="In isoform A and isoform S." evidence="29">
    <location>
        <begin position="1"/>
        <end position="32"/>
    </location>
</feature>
<feature type="splice variant" id="VSP_005881" description="In isoform 1, isoform C, isoform O and isoform R." evidence="30">
    <original>MYGNNNPGSNNNNGGYPPYGYNNKS</original>
    <variation>MDFNFDTVTPCSTMSSYYNFKMA</variation>
    <location>
        <begin position="1"/>
        <end position="25"/>
    </location>
</feature>
<feature type="splice variant" id="VSP_040526" description="In isoform V." evidence="29">
    <original>MYGNNNPGSNNNNGGYPPYGYNNKS</original>
    <variation>MDFNFDTVTPCSTMSSYYNFKMARNGIDSSY</variation>
    <location>
        <begin position="1"/>
        <end position="25"/>
    </location>
</feature>
<feature type="splice variant" id="VSP_005882" description="In isoform CM1." evidence="28">
    <original>SGGRGFGMSHSLPSGMSRYAFSP</original>
    <variation>RHIFFHSPERSSHHYHRKAKDTH</variation>
    <location>
        <begin position="26"/>
        <end position="48"/>
    </location>
</feature>
<feature type="splice variant" id="VSP_019289" description="In isoform K." evidence="30">
    <original>GGRGFGMSHSLPSGMS</original>
    <variation>PERSSHHYHRKAKDTH</variation>
    <location>
        <begin position="27"/>
        <end position="42"/>
    </location>
</feature>
<feature type="splice variant" id="VSP_005883" description="In isoform A, isoform C, isoform G, isoform W, isoform MS11, isoform O and isoform R." evidence="27 29">
    <location>
        <begin position="42"/>
        <end position="49"/>
    </location>
</feature>
<feature type="splice variant" id="VSP_019290" description="In isoform K." evidence="30">
    <location>
        <begin position="43"/>
        <end position="354"/>
    </location>
</feature>
<feature type="splice variant" id="VSP_005884" description="In isoform CM1." evidence="28">
    <location>
        <begin position="49"/>
        <end position="354"/>
    </location>
</feature>
<feature type="splice variant" id="VSP_005885" description="In isoform MS11 and isoform O." evidence="27">
    <original>GRSIKSQQRFQNSHPYFDAKKFI</original>
    <variation>DGAMEKLRSLFDAICDAIFGLDSENFADLLDGLYRRKYHYPYL</variation>
    <location>
        <begin position="332"/>
        <end position="354"/>
    </location>
</feature>
<feature type="splice variant" id="VSP_005886" description="In isoform W, isoform MS16 and isoform R." evidence="27 29">
    <original>RSIKSQQRFQNSHPYFDAKKFI</original>
    <variation>ENFADLLDGLYRRKYHYPYL</variation>
    <location>
        <begin position="333"/>
        <end position="354"/>
    </location>
</feature>
<feature type="sequence conflict" description="In Ref. 2; AAA28921." evidence="30" ref="2">
    <original>P</original>
    <variation>S</variation>
    <location>
        <position position="93"/>
    </location>
</feature>
<feature type="sequence conflict" description="In Ref. 2; AAA28921 and 5; ACY56908/ADD20766." evidence="30" ref="2 5">
    <original>S</original>
    <variation>G</variation>
    <location>
        <position position="96"/>
    </location>
</feature>
<feature type="sequence conflict" description="In Ref. 5; ACY56908." evidence="30" ref="5">
    <original>N</original>
    <variation>K</variation>
    <location>
        <position position="273"/>
    </location>
</feature>
<feature type="strand" evidence="34">
    <location>
        <begin position="125"/>
        <end position="130"/>
    </location>
</feature>
<feature type="helix" evidence="34">
    <location>
        <begin position="138"/>
        <end position="146"/>
    </location>
</feature>
<feature type="strand" evidence="34">
    <location>
        <begin position="151"/>
        <end position="155"/>
    </location>
</feature>
<feature type="turn" evidence="34">
    <location>
        <begin position="160"/>
        <end position="163"/>
    </location>
</feature>
<feature type="strand" evidence="34">
    <location>
        <begin position="167"/>
        <end position="175"/>
    </location>
</feature>
<feature type="helix" evidence="34">
    <location>
        <begin position="176"/>
        <end position="186"/>
    </location>
</feature>
<feature type="strand" evidence="35">
    <location>
        <begin position="190"/>
        <end position="193"/>
    </location>
</feature>
<feature type="strand" evidence="34">
    <location>
        <begin position="197"/>
        <end position="200"/>
    </location>
</feature>
<feature type="turn" evidence="34">
    <location>
        <begin position="207"/>
        <end position="210"/>
    </location>
</feature>
<feature type="strand" evidence="34">
    <location>
        <begin position="212"/>
        <end position="217"/>
    </location>
</feature>
<feature type="helix" evidence="34">
    <location>
        <begin position="224"/>
        <end position="231"/>
    </location>
</feature>
<feature type="strand" evidence="34">
    <location>
        <begin position="233"/>
        <end position="235"/>
    </location>
</feature>
<feature type="strand" evidence="34">
    <location>
        <begin position="237"/>
        <end position="244"/>
    </location>
</feature>
<feature type="turn" evidence="34">
    <location>
        <begin position="246"/>
        <end position="248"/>
    </location>
</feature>
<feature type="strand" evidence="34">
    <location>
        <begin position="251"/>
        <end position="261"/>
    </location>
</feature>
<feature type="helix" evidence="34">
    <location>
        <begin position="262"/>
        <end position="272"/>
    </location>
</feature>
<feature type="strand" evidence="34">
    <location>
        <begin position="285"/>
        <end position="288"/>
    </location>
</feature>
<feature type="sequence conflict" description="In Ref. 6; AAB21845." evidence="30" ref="6">
    <original>S</original>
    <variation>C</variation>
    <location sequence="P19339-2">
        <position position="15"/>
    </location>
</feature>
<accession>P19339</accession>
<accession>A4V434</accession>
<accession>A4V435</accession>
<accession>A4V436</accession>
<accession>A4V437</accession>
<accession>C9QP40</accession>
<accession>D0IQK2</accession>
<accession>D3PFI6</accession>
<accession>E1JJI8</accession>
<accession>E1JJI9</accession>
<accession>E1JJJ0</accession>
<accession>E1JJJ2</accession>
<accession>E1JJJ3</accession>
<accession>P19340</accession>
<accession>Q0KHV2</accession>
<accession>Q26466</accession>
<accession>Q2MGN7</accession>
<accession>Q2MGN8</accession>
<accession>Q2MGN9</accession>
<accession>Q2MGP1</accession>
<accession>Q7KVU6</accession>
<accession>Q7YZ92</accession>
<accession>Q8IRQ1</accession>
<accession>Q99141</accession>
<accession>Q9TYF5</accession>
<accession>Q9W3S6</accession>
<dbReference type="EMBL" id="M23635">
    <property type="protein sequence ID" value="AAA28885.1"/>
    <property type="molecule type" value="mRNA"/>
</dbReference>
<dbReference type="EMBL" id="M23636">
    <property type="protein sequence ID" value="AAA28884.1"/>
    <property type="molecule type" value="mRNA"/>
</dbReference>
<dbReference type="EMBL" id="M59447">
    <property type="protein sequence ID" value="AAA28922.1"/>
    <property type="molecule type" value="mRNA"/>
</dbReference>
<dbReference type="EMBL" id="M59448">
    <property type="protein sequence ID" value="AAA28921.1"/>
    <property type="molecule type" value="mRNA"/>
</dbReference>
<dbReference type="EMBL" id="AE014298">
    <property type="protein sequence ID" value="AAF46240.2"/>
    <property type="molecule type" value="Genomic_DNA"/>
</dbReference>
<dbReference type="EMBL" id="AE014298">
    <property type="protein sequence ID" value="AAF46241.4"/>
    <property type="molecule type" value="Genomic_DNA"/>
</dbReference>
<dbReference type="EMBL" id="AE014298">
    <property type="protein sequence ID" value="AAG22410.1"/>
    <property type="molecule type" value="Genomic_DNA"/>
</dbReference>
<dbReference type="EMBL" id="AE014298">
    <property type="protein sequence ID" value="AAG22411.1"/>
    <property type="molecule type" value="Genomic_DNA"/>
</dbReference>
<dbReference type="EMBL" id="AE014298">
    <property type="protein sequence ID" value="AAN09197.1"/>
    <property type="molecule type" value="Genomic_DNA"/>
</dbReference>
<dbReference type="EMBL" id="AE014298">
    <property type="protein sequence ID" value="AAN09198.1"/>
    <property type="molecule type" value="Genomic_DNA"/>
</dbReference>
<dbReference type="EMBL" id="AE014298">
    <property type="protein sequence ID" value="AAN09200.2"/>
    <property type="molecule type" value="Genomic_DNA"/>
</dbReference>
<dbReference type="EMBL" id="AE014298">
    <property type="protein sequence ID" value="AAN09201.2"/>
    <property type="molecule type" value="Genomic_DNA"/>
</dbReference>
<dbReference type="EMBL" id="AE014298">
    <property type="protein sequence ID" value="AAO41638.2"/>
    <property type="molecule type" value="Genomic_DNA"/>
</dbReference>
<dbReference type="EMBL" id="AE014298">
    <property type="protein sequence ID" value="AAZ52509.1"/>
    <property type="molecule type" value="Genomic_DNA"/>
</dbReference>
<dbReference type="EMBL" id="AE014298">
    <property type="protein sequence ID" value="AAZ52510.1"/>
    <property type="molecule type" value="Genomic_DNA"/>
</dbReference>
<dbReference type="EMBL" id="AE014298">
    <property type="protein sequence ID" value="AAZ52511.1"/>
    <property type="molecule type" value="Genomic_DNA"/>
</dbReference>
<dbReference type="EMBL" id="AE014298">
    <property type="protein sequence ID" value="AAZ52512.1"/>
    <property type="molecule type" value="Genomic_DNA"/>
</dbReference>
<dbReference type="EMBL" id="AE014298">
    <property type="protein sequence ID" value="AAZ52513.1"/>
    <property type="molecule type" value="Genomic_DNA"/>
</dbReference>
<dbReference type="EMBL" id="AE014298">
    <property type="protein sequence ID" value="AAZ52514.1"/>
    <property type="molecule type" value="Genomic_DNA"/>
</dbReference>
<dbReference type="EMBL" id="AE014298">
    <property type="protein sequence ID" value="ACZ95222.1"/>
    <property type="molecule type" value="Genomic_DNA"/>
</dbReference>
<dbReference type="EMBL" id="AE014298">
    <property type="protein sequence ID" value="ACZ95223.1"/>
    <property type="molecule type" value="Genomic_DNA"/>
</dbReference>
<dbReference type="EMBL" id="AE014298">
    <property type="protein sequence ID" value="ACZ95224.1"/>
    <property type="molecule type" value="Genomic_DNA"/>
</dbReference>
<dbReference type="EMBL" id="AE014298">
    <property type="protein sequence ID" value="ACZ95225.1"/>
    <property type="molecule type" value="Genomic_DNA"/>
</dbReference>
<dbReference type="EMBL" id="AE014298">
    <property type="protein sequence ID" value="ACZ95226.1"/>
    <property type="molecule type" value="Genomic_DNA"/>
</dbReference>
<dbReference type="EMBL" id="BT003583">
    <property type="protein sequence ID" value="AAO39587.1"/>
    <property type="molecule type" value="mRNA"/>
</dbReference>
<dbReference type="EMBL" id="BT099922">
    <property type="protein sequence ID" value="ACX32993.1"/>
    <property type="molecule type" value="mRNA"/>
</dbReference>
<dbReference type="EMBL" id="BT100240">
    <property type="protein sequence ID" value="ACY56908.1"/>
    <property type="molecule type" value="mRNA"/>
</dbReference>
<dbReference type="EMBL" id="BT120392">
    <property type="protein sequence ID" value="ADD20766.1"/>
    <property type="molecule type" value="mRNA"/>
</dbReference>
<dbReference type="EMBL" id="S88324">
    <property type="protein sequence ID" value="AAB21845.1"/>
    <property type="molecule type" value="Genomic_DNA"/>
</dbReference>
<dbReference type="EMBL" id="D84425">
    <property type="protein sequence ID" value="BAA20294.1"/>
    <property type="molecule type" value="Genomic_DNA"/>
</dbReference>
<dbReference type="PIR" id="A31639">
    <property type="entry name" value="A31639"/>
</dbReference>
<dbReference type="PIR" id="A39725">
    <property type="entry name" value="B31639"/>
</dbReference>
<dbReference type="RefSeq" id="NP_001027062.1">
    <molecule id="P19339-6"/>
    <property type="nucleotide sequence ID" value="NM_001031891.3"/>
</dbReference>
<dbReference type="RefSeq" id="NP_001027063.1">
    <molecule id="P19339-8"/>
    <property type="nucleotide sequence ID" value="NM_001031892.2"/>
</dbReference>
<dbReference type="RefSeq" id="NP_001027064.1">
    <molecule id="P19339-3"/>
    <property type="nucleotide sequence ID" value="NM_001031893.2"/>
</dbReference>
<dbReference type="RefSeq" id="NP_001027065.1">
    <molecule id="P19339-1"/>
    <property type="nucleotide sequence ID" value="NM_001031894.1"/>
</dbReference>
<dbReference type="RefSeq" id="NP_001027066.1">
    <molecule id="P19339-11"/>
    <property type="nucleotide sequence ID" value="NM_001031895.1"/>
</dbReference>
<dbReference type="RefSeq" id="NP_001162686.1">
    <molecule id="P19339-5"/>
    <property type="nucleotide sequence ID" value="NM_001169215.2"/>
</dbReference>
<dbReference type="RefSeq" id="NP_001162687.1">
    <molecule id="P19339-11"/>
    <property type="nucleotide sequence ID" value="NM_001169216.2"/>
</dbReference>
<dbReference type="RefSeq" id="NP_001162688.1">
    <molecule id="P19339-12"/>
    <property type="nucleotide sequence ID" value="NM_001169217.2"/>
</dbReference>
<dbReference type="RefSeq" id="NP_001162689.1">
    <molecule id="P19339-13"/>
    <property type="nucleotide sequence ID" value="NM_001169218.3"/>
</dbReference>
<dbReference type="RefSeq" id="NP_001162690.1">
    <molecule id="P19339-1"/>
    <property type="nucleotide sequence ID" value="NM_001169219.1"/>
</dbReference>
<dbReference type="RefSeq" id="NP_001259305.1">
    <molecule id="P19339-11"/>
    <property type="nucleotide sequence ID" value="NM_001272376.1"/>
</dbReference>
<dbReference type="RefSeq" id="NP_001259306.1">
    <molecule id="P19339-3"/>
    <property type="nucleotide sequence ID" value="NM_001272377.1"/>
</dbReference>
<dbReference type="RefSeq" id="NP_524791.3">
    <molecule id="P19339-8"/>
    <property type="nucleotide sequence ID" value="NM_080052.4"/>
</dbReference>
<dbReference type="RefSeq" id="NP_727160.2">
    <molecule id="P19339-7"/>
    <property type="nucleotide sequence ID" value="NM_167110.3"/>
</dbReference>
<dbReference type="RefSeq" id="NP_727161.3">
    <molecule id="P19339-9"/>
    <property type="nucleotide sequence ID" value="NM_167111.3"/>
</dbReference>
<dbReference type="RefSeq" id="NP_727162.2">
    <molecule id="P19339-1"/>
    <property type="nucleotide sequence ID" value="NM_167112.2"/>
</dbReference>
<dbReference type="RefSeq" id="NP_727163.2">
    <molecule id="P19339-10"/>
    <property type="nucleotide sequence ID" value="NM_167113.3"/>
</dbReference>
<dbReference type="RefSeq" id="NP_727164.2">
    <molecule id="P19339-4"/>
    <property type="nucleotide sequence ID" value="NM_167114.2"/>
</dbReference>
<dbReference type="RefSeq" id="NP_727165.2">
    <molecule id="P19339-10"/>
    <property type="nucleotide sequence ID" value="NM_167115.3"/>
</dbReference>
<dbReference type="RefSeq" id="NP_727166.2">
    <molecule id="P19339-7"/>
    <property type="nucleotide sequence ID" value="NM_167116.2"/>
</dbReference>
<dbReference type="RefSeq" id="NP_727167.2">
    <molecule id="P19339-3"/>
    <property type="nucleotide sequence ID" value="NM_167117.2"/>
</dbReference>
<dbReference type="RefSeq" id="NP_727168.1">
    <molecule id="P19339-3"/>
    <property type="nucleotide sequence ID" value="NM_167118.2"/>
</dbReference>
<dbReference type="PDB" id="1B7F">
    <property type="method" value="X-ray"/>
    <property type="resolution" value="2.60 A"/>
    <property type="chains" value="A/B=122-289"/>
</dbReference>
<dbReference type="PDB" id="1SXL">
    <property type="method" value="NMR"/>
    <property type="chains" value="A=199-294"/>
</dbReference>
<dbReference type="PDB" id="2SXL">
    <property type="method" value="NMR"/>
    <property type="chains" value="A=122-209"/>
</dbReference>
<dbReference type="PDB" id="3SXL">
    <property type="method" value="X-ray"/>
    <property type="resolution" value="2.70 A"/>
    <property type="chains" value="A/B/C=111-294"/>
</dbReference>
<dbReference type="PDB" id="4QQB">
    <property type="method" value="X-ray"/>
    <property type="resolution" value="2.80 A"/>
    <property type="chains" value="A/B=122-294"/>
</dbReference>
<dbReference type="PDBsum" id="1B7F"/>
<dbReference type="PDBsum" id="1SXL"/>
<dbReference type="PDBsum" id="2SXL"/>
<dbReference type="PDBsum" id="3SXL"/>
<dbReference type="PDBsum" id="4QQB"/>
<dbReference type="BMRB" id="P19339"/>
<dbReference type="SASBDB" id="P19339"/>
<dbReference type="SMR" id="P19339"/>
<dbReference type="BioGRID" id="533777">
    <property type="interactions" value="117"/>
</dbReference>
<dbReference type="DIP" id="DIP-44607N"/>
<dbReference type="FunCoup" id="P19339">
    <property type="interactions" value="53"/>
</dbReference>
<dbReference type="IntAct" id="P19339">
    <property type="interactions" value="11"/>
</dbReference>
<dbReference type="MINT" id="P19339"/>
<dbReference type="STRING" id="7227.FBpp0303712"/>
<dbReference type="PaxDb" id="7227-FBpp0303693"/>
<dbReference type="DNASU" id="3772180"/>
<dbReference type="EnsemblMetazoa" id="FBtr0331247">
    <molecule id="P19339-9"/>
    <property type="protein sequence ID" value="FBpp0303689"/>
    <property type="gene ID" value="FBgn0264270"/>
</dbReference>
<dbReference type="EnsemblMetazoa" id="FBtr0331249">
    <molecule id="P19339-3"/>
    <property type="protein sequence ID" value="FBpp0303691"/>
    <property type="gene ID" value="FBgn0264270"/>
</dbReference>
<dbReference type="EnsemblMetazoa" id="FBtr0331250">
    <molecule id="P19339-7"/>
    <property type="protein sequence ID" value="FBpp0303692"/>
    <property type="gene ID" value="FBgn0264270"/>
</dbReference>
<dbReference type="EnsemblMetazoa" id="FBtr0331251">
    <molecule id="P19339-4"/>
    <property type="protein sequence ID" value="FBpp0303693"/>
    <property type="gene ID" value="FBgn0264270"/>
</dbReference>
<dbReference type="EnsemblMetazoa" id="FBtr0331253">
    <molecule id="P19339-7"/>
    <property type="protein sequence ID" value="FBpp0303695"/>
    <property type="gene ID" value="FBgn0264270"/>
</dbReference>
<dbReference type="EnsemblMetazoa" id="FBtr0331254">
    <molecule id="P19339-11"/>
    <property type="protein sequence ID" value="FBpp0303696"/>
    <property type="gene ID" value="FBgn0264270"/>
</dbReference>
<dbReference type="EnsemblMetazoa" id="FBtr0331255">
    <molecule id="P19339-1"/>
    <property type="protein sequence ID" value="FBpp0303697"/>
    <property type="gene ID" value="FBgn0264270"/>
</dbReference>
<dbReference type="EnsemblMetazoa" id="FBtr0331256">
    <molecule id="P19339-3"/>
    <property type="protein sequence ID" value="FBpp0303698"/>
    <property type="gene ID" value="FBgn0264270"/>
</dbReference>
<dbReference type="EnsemblMetazoa" id="FBtr0331257">
    <molecule id="P19339-8"/>
    <property type="protein sequence ID" value="FBpp0303699"/>
    <property type="gene ID" value="FBgn0264270"/>
</dbReference>
<dbReference type="EnsemblMetazoa" id="FBtr0331258">
    <molecule id="P19339-6"/>
    <property type="protein sequence ID" value="FBpp0303700"/>
    <property type="gene ID" value="FBgn0264270"/>
</dbReference>
<dbReference type="EnsemblMetazoa" id="FBtr0331259">
    <molecule id="P19339-10"/>
    <property type="protein sequence ID" value="FBpp0303701"/>
    <property type="gene ID" value="FBgn0264270"/>
</dbReference>
<dbReference type="EnsemblMetazoa" id="FBtr0331260">
    <molecule id="P19339-3"/>
    <property type="protein sequence ID" value="FBpp0303702"/>
    <property type="gene ID" value="FBgn0264270"/>
</dbReference>
<dbReference type="EnsemblMetazoa" id="FBtr0331261">
    <molecule id="P19339-8"/>
    <property type="protein sequence ID" value="FBpp0303703"/>
    <property type="gene ID" value="FBgn0264270"/>
</dbReference>
<dbReference type="EnsemblMetazoa" id="FBtr0331262">
    <molecule id="P19339-1"/>
    <property type="protein sequence ID" value="FBpp0303704"/>
    <property type="gene ID" value="FBgn0264270"/>
</dbReference>
<dbReference type="EnsemblMetazoa" id="FBtr0331263">
    <molecule id="P19339-10"/>
    <property type="protein sequence ID" value="FBpp0303705"/>
    <property type="gene ID" value="FBgn0264270"/>
</dbReference>
<dbReference type="EnsemblMetazoa" id="FBtr0331264">
    <molecule id="P19339-5"/>
    <property type="protein sequence ID" value="FBpp0303706"/>
    <property type="gene ID" value="FBgn0264270"/>
</dbReference>
<dbReference type="EnsemblMetazoa" id="FBtr0331265">
    <molecule id="P19339-11"/>
    <property type="protein sequence ID" value="FBpp0303707"/>
    <property type="gene ID" value="FBgn0264270"/>
</dbReference>
<dbReference type="EnsemblMetazoa" id="FBtr0331266">
    <molecule id="P19339-12"/>
    <property type="protein sequence ID" value="FBpp0303708"/>
    <property type="gene ID" value="FBgn0264270"/>
</dbReference>
<dbReference type="EnsemblMetazoa" id="FBtr0331268">
    <molecule id="P19339-1"/>
    <property type="protein sequence ID" value="FBpp0303710"/>
    <property type="gene ID" value="FBgn0264270"/>
</dbReference>
<dbReference type="EnsemblMetazoa" id="FBtr0336727">
    <molecule id="P19339-11"/>
    <property type="protein sequence ID" value="FBpp0307708"/>
    <property type="gene ID" value="FBgn0264270"/>
</dbReference>
<dbReference type="EnsemblMetazoa" id="FBtr0336728">
    <molecule id="P19339-3"/>
    <property type="protein sequence ID" value="FBpp0307709"/>
    <property type="gene ID" value="FBgn0264270"/>
</dbReference>
<dbReference type="EnsemblMetazoa" id="FBtr0336729">
    <molecule id="P19339-13"/>
    <property type="protein sequence ID" value="FBpp0307710"/>
    <property type="gene ID" value="FBgn0264270"/>
</dbReference>
<dbReference type="GeneID" id="3772180"/>
<dbReference type="KEGG" id="dme:Dmel_CG43770"/>
<dbReference type="UCSC" id="CG18350-RE">
    <property type="organism name" value="d. melanogaster"/>
</dbReference>
<dbReference type="UCSC" id="CG18350-RF">
    <property type="organism name" value="d. melanogaster"/>
</dbReference>
<dbReference type="UCSC" id="CG18350-RL">
    <property type="organism name" value="d. melanogaster"/>
</dbReference>
<dbReference type="UCSC" id="CG18350-RN">
    <property type="organism name" value="d. melanogaster"/>
</dbReference>
<dbReference type="AGR" id="FB:FBgn0264270"/>
<dbReference type="CTD" id="3772180"/>
<dbReference type="FlyBase" id="FBgn0264270">
    <property type="gene designation" value="Sxl"/>
</dbReference>
<dbReference type="VEuPathDB" id="VectorBase:FBgn0264270"/>
<dbReference type="eggNOG" id="KOG0118">
    <property type="taxonomic scope" value="Eukaryota"/>
</dbReference>
<dbReference type="InParanoid" id="P19339"/>
<dbReference type="OMA" id="NICNMPP"/>
<dbReference type="OrthoDB" id="266020at2759"/>
<dbReference type="PhylomeDB" id="P19339"/>
<dbReference type="SignaLink" id="P19339"/>
<dbReference type="BioGRID-ORCS" id="3772180">
    <property type="hits" value="0 hits in 1 CRISPR screen"/>
</dbReference>
<dbReference type="ChiTaRS" id="Sxl">
    <property type="organism name" value="fly"/>
</dbReference>
<dbReference type="EvolutionaryTrace" id="P19339"/>
<dbReference type="GenomeRNAi" id="3772180"/>
<dbReference type="PRO" id="PR:P19339"/>
<dbReference type="Proteomes" id="UP000000803">
    <property type="component" value="Chromosome X"/>
</dbReference>
<dbReference type="Bgee" id="FBgn0264270">
    <property type="expression patterns" value="Expressed in lamina monopolar neuron L4 (Drosophila) in insect head and 287 other cell types or tissues"/>
</dbReference>
<dbReference type="ExpressionAtlas" id="P19339">
    <property type="expression patterns" value="baseline and differential"/>
</dbReference>
<dbReference type="GO" id="GO:0005737">
    <property type="term" value="C:cytoplasm"/>
    <property type="evidence" value="ECO:0000314"/>
    <property type="project" value="UniProtKB"/>
</dbReference>
<dbReference type="GO" id="GO:0005829">
    <property type="term" value="C:cytosol"/>
    <property type="evidence" value="ECO:0000318"/>
    <property type="project" value="GO_Central"/>
</dbReference>
<dbReference type="GO" id="GO:0005634">
    <property type="term" value="C:nucleus"/>
    <property type="evidence" value="ECO:0000314"/>
    <property type="project" value="UniProtKB"/>
</dbReference>
<dbReference type="GO" id="GO:0032991">
    <property type="term" value="C:protein-containing complex"/>
    <property type="evidence" value="ECO:0000353"/>
    <property type="project" value="FlyBase"/>
</dbReference>
<dbReference type="GO" id="GO:1990904">
    <property type="term" value="C:ribonucleoprotein complex"/>
    <property type="evidence" value="ECO:0000318"/>
    <property type="project" value="GO_Central"/>
</dbReference>
<dbReference type="GO" id="GO:0003730">
    <property type="term" value="F:mRNA 3'-UTR binding"/>
    <property type="evidence" value="ECO:0000314"/>
    <property type="project" value="FlyBase"/>
</dbReference>
<dbReference type="GO" id="GO:0048027">
    <property type="term" value="F:mRNA 5'-UTR binding"/>
    <property type="evidence" value="ECO:0000314"/>
    <property type="project" value="FlyBase"/>
</dbReference>
<dbReference type="GO" id="GO:0003729">
    <property type="term" value="F:mRNA binding"/>
    <property type="evidence" value="ECO:0000314"/>
    <property type="project" value="UniProtKB"/>
</dbReference>
<dbReference type="GO" id="GO:0000900">
    <property type="term" value="F:mRNA regulatory element binding translation repressor activity"/>
    <property type="evidence" value="ECO:0000314"/>
    <property type="project" value="UniProtKB"/>
</dbReference>
<dbReference type="GO" id="GO:0008143">
    <property type="term" value="F:poly(A) binding"/>
    <property type="evidence" value="ECO:0000318"/>
    <property type="project" value="GO_Central"/>
</dbReference>
<dbReference type="GO" id="GO:0008266">
    <property type="term" value="F:poly(U) RNA binding"/>
    <property type="evidence" value="ECO:0000314"/>
    <property type="project" value="UniProtKB"/>
</dbReference>
<dbReference type="GO" id="GO:0008187">
    <property type="term" value="F:poly-pyrimidine tract binding"/>
    <property type="evidence" value="ECO:0000314"/>
    <property type="project" value="UniProtKB"/>
</dbReference>
<dbReference type="GO" id="GO:0036002">
    <property type="term" value="F:pre-mRNA binding"/>
    <property type="evidence" value="ECO:0000314"/>
    <property type="project" value="FlyBase"/>
</dbReference>
<dbReference type="GO" id="GO:0003723">
    <property type="term" value="F:RNA binding"/>
    <property type="evidence" value="ECO:0000314"/>
    <property type="project" value="FlyBase"/>
</dbReference>
<dbReference type="GO" id="GO:0000380">
    <property type="term" value="P:alternative mRNA splicing, via spliceosome"/>
    <property type="evidence" value="ECO:0007669"/>
    <property type="project" value="InterPro"/>
</dbReference>
<dbReference type="GO" id="GO:1990399">
    <property type="term" value="P:epithelium regeneration"/>
    <property type="evidence" value="ECO:0000315"/>
    <property type="project" value="FlyBase"/>
</dbReference>
<dbReference type="GO" id="GO:0019099">
    <property type="term" value="P:female germ-line sex determination"/>
    <property type="evidence" value="ECO:0000315"/>
    <property type="project" value="FlyBase"/>
</dbReference>
<dbReference type="GO" id="GO:0030237">
    <property type="term" value="P:female sex determination"/>
    <property type="evidence" value="ECO:0000314"/>
    <property type="project" value="UniProtKB"/>
</dbReference>
<dbReference type="GO" id="GO:0048142">
    <property type="term" value="P:germarium-derived cystoblast division"/>
    <property type="evidence" value="ECO:0000315"/>
    <property type="project" value="FlyBase"/>
</dbReference>
<dbReference type="GO" id="GO:0007446">
    <property type="term" value="P:imaginal disc growth"/>
    <property type="evidence" value="ECO:0000315"/>
    <property type="project" value="FlyBase"/>
</dbReference>
<dbReference type="GO" id="GO:0048025">
    <property type="term" value="P:negative regulation of mRNA splicing, via spliceosome"/>
    <property type="evidence" value="ECO:0000304"/>
    <property type="project" value="FlyBase"/>
</dbReference>
<dbReference type="GO" id="GO:0046832">
    <property type="term" value="P:negative regulation of RNA export from nucleus"/>
    <property type="evidence" value="ECO:0000314"/>
    <property type="project" value="UniProtKB"/>
</dbReference>
<dbReference type="GO" id="GO:0017148">
    <property type="term" value="P:negative regulation of translation"/>
    <property type="evidence" value="ECO:0000314"/>
    <property type="project" value="UniProtKB"/>
</dbReference>
<dbReference type="GO" id="GO:0045947">
    <property type="term" value="P:negative regulation of translational initiation"/>
    <property type="evidence" value="ECO:0000314"/>
    <property type="project" value="UniProtKB"/>
</dbReference>
<dbReference type="GO" id="GO:0009994">
    <property type="term" value="P:oocyte differentiation"/>
    <property type="evidence" value="ECO:0000314"/>
    <property type="project" value="FlyBase"/>
</dbReference>
<dbReference type="GO" id="GO:0048477">
    <property type="term" value="P:oogenesis"/>
    <property type="evidence" value="ECO:0000304"/>
    <property type="project" value="FlyBase"/>
</dbReference>
<dbReference type="GO" id="GO:0033120">
    <property type="term" value="P:positive regulation of RNA splicing"/>
    <property type="evidence" value="ECO:0000314"/>
    <property type="project" value="FlyBase"/>
</dbReference>
<dbReference type="GO" id="GO:0045880">
    <property type="term" value="P:positive regulation of smoothened signaling pathway"/>
    <property type="evidence" value="ECO:0000314"/>
    <property type="project" value="FlyBase"/>
</dbReference>
<dbReference type="GO" id="GO:0050821">
    <property type="term" value="P:protein stabilization"/>
    <property type="evidence" value="ECO:0000314"/>
    <property type="project" value="FlyBase"/>
</dbReference>
<dbReference type="GO" id="GO:0007131">
    <property type="term" value="P:reciprocal meiotic recombination"/>
    <property type="evidence" value="ECO:0000304"/>
    <property type="project" value="FlyBase"/>
</dbReference>
<dbReference type="GO" id="GO:0000381">
    <property type="term" value="P:regulation of alternative mRNA splicing, via spliceosome"/>
    <property type="evidence" value="ECO:0000314"/>
    <property type="project" value="UniProtKB"/>
</dbReference>
<dbReference type="GO" id="GO:0048024">
    <property type="term" value="P:regulation of mRNA splicing, via spliceosome"/>
    <property type="evidence" value="ECO:0000304"/>
    <property type="project" value="FlyBase"/>
</dbReference>
<dbReference type="GO" id="GO:2000035">
    <property type="term" value="P:regulation of stem cell division"/>
    <property type="evidence" value="ECO:0000315"/>
    <property type="project" value="FlyBase"/>
</dbReference>
<dbReference type="GO" id="GO:0007530">
    <property type="term" value="P:sex determination"/>
    <property type="evidence" value="ECO:0000304"/>
    <property type="project" value="FlyBase"/>
</dbReference>
<dbReference type="GO" id="GO:0007541">
    <property type="term" value="P:sex determination, primary response to X:A ratio"/>
    <property type="evidence" value="ECO:0000304"/>
    <property type="project" value="FlyBase"/>
</dbReference>
<dbReference type="GO" id="GO:0007548">
    <property type="term" value="P:sex differentiation"/>
    <property type="evidence" value="ECO:0000304"/>
    <property type="project" value="FlyBase"/>
</dbReference>
<dbReference type="GO" id="GO:0007549">
    <property type="term" value="P:sex-chromosome dosage compensation"/>
    <property type="evidence" value="ECO:0000304"/>
    <property type="project" value="FlyBase"/>
</dbReference>
<dbReference type="GO" id="GO:0018993">
    <property type="term" value="P:somatic sex determination"/>
    <property type="evidence" value="ECO:0000304"/>
    <property type="project" value="FlyBase"/>
</dbReference>
<dbReference type="CDD" id="cd12649">
    <property type="entry name" value="RRM1_SXL"/>
    <property type="match status" value="1"/>
</dbReference>
<dbReference type="CDD" id="cd12376">
    <property type="entry name" value="RRM2_Hu_like"/>
    <property type="match status" value="1"/>
</dbReference>
<dbReference type="DisProt" id="DP01605"/>
<dbReference type="FunFam" id="3.30.70.330:FF:000205">
    <property type="entry name" value="Sex lethal, isoform B"/>
    <property type="match status" value="1"/>
</dbReference>
<dbReference type="FunFam" id="3.30.70.330:FF:000383">
    <property type="entry name" value="Sex lethal, isoform D"/>
    <property type="match status" value="1"/>
</dbReference>
<dbReference type="Gene3D" id="3.30.70.330">
    <property type="match status" value="2"/>
</dbReference>
<dbReference type="InterPro" id="IPR050502">
    <property type="entry name" value="Euk_RNA-bind_prot"/>
</dbReference>
<dbReference type="InterPro" id="IPR002343">
    <property type="entry name" value="Hud_Sxl_RNA"/>
</dbReference>
<dbReference type="InterPro" id="IPR012677">
    <property type="entry name" value="Nucleotide-bd_a/b_plait_sf"/>
</dbReference>
<dbReference type="InterPro" id="IPR035979">
    <property type="entry name" value="RBD_domain_sf"/>
</dbReference>
<dbReference type="InterPro" id="IPR000504">
    <property type="entry name" value="RRM_dom"/>
</dbReference>
<dbReference type="InterPro" id="IPR006546">
    <property type="entry name" value="Sxl"/>
</dbReference>
<dbReference type="NCBIfam" id="TIGR01659">
    <property type="entry name" value="sex-lethal"/>
    <property type="match status" value="1"/>
</dbReference>
<dbReference type="PANTHER" id="PTHR48025">
    <property type="entry name" value="OS02G0815200 PROTEIN"/>
    <property type="match status" value="1"/>
</dbReference>
<dbReference type="PANTHER" id="PTHR48025:SF1">
    <property type="entry name" value="RRM DOMAIN-CONTAINING PROTEIN"/>
    <property type="match status" value="1"/>
</dbReference>
<dbReference type="Pfam" id="PF00076">
    <property type="entry name" value="RRM_1"/>
    <property type="match status" value="2"/>
</dbReference>
<dbReference type="PRINTS" id="PR00961">
    <property type="entry name" value="HUDSXLRNA"/>
</dbReference>
<dbReference type="SMART" id="SM00360">
    <property type="entry name" value="RRM"/>
    <property type="match status" value="2"/>
</dbReference>
<dbReference type="SUPFAM" id="SSF54928">
    <property type="entry name" value="RNA-binding domain, RBD"/>
    <property type="match status" value="1"/>
</dbReference>
<dbReference type="PROSITE" id="PS50102">
    <property type="entry name" value="RRM"/>
    <property type="match status" value="2"/>
</dbReference>
<name>SXL_DROME</name>
<reference key="1">
    <citation type="journal article" date="1988" name="Cell">
        <title>Sex-lethal, a Drosophila sex determination switch gene, exhibits sex-specific RNA splicing and sequence similarity to RNA binding proteins.</title>
        <authorList>
            <person name="Bell L.R."/>
            <person name="Maine E.M."/>
            <person name="Schedl P."/>
            <person name="Cline T.W."/>
        </authorList>
    </citation>
    <scope>NUCLEOTIDE SEQUENCE [MRNA] (ISOFORMS MS3 AND CM1)</scope>
    <scope>FUNCTION</scope>
    <scope>DEVELOPMENTAL STAGE</scope>
    <source>
        <strain>Oregon-R</strain>
    </source>
</reference>
<reference key="2">
    <citation type="journal article" date="1991" name="Mol. Cell. Biol.">
        <title>The complex set of late transcripts from the Drosophila sex determination gene sex-lethal encodes multiple related polypeptides.</title>
        <authorList>
            <person name="Samuels M.E."/>
            <person name="Schedl P."/>
            <person name="Cline T.W."/>
        </authorList>
    </citation>
    <scope>NUCLEOTIDE SEQUENCE [MRNA] (ISOFORMS MS3; MS11 AND MS16)</scope>
    <scope>FUNCTION</scope>
    <scope>DEVELOPMENTAL STAGE</scope>
    <source>
        <tissue>Embryo</tissue>
    </source>
</reference>
<reference key="3">
    <citation type="journal article" date="2000" name="Science">
        <title>The genome sequence of Drosophila melanogaster.</title>
        <authorList>
            <person name="Adams M.D."/>
            <person name="Celniker S.E."/>
            <person name="Holt R.A."/>
            <person name="Evans C.A."/>
            <person name="Gocayne J.D."/>
            <person name="Amanatides P.G."/>
            <person name="Scherer S.E."/>
            <person name="Li P.W."/>
            <person name="Hoskins R.A."/>
            <person name="Galle R.F."/>
            <person name="George R.A."/>
            <person name="Lewis S.E."/>
            <person name="Richards S."/>
            <person name="Ashburner M."/>
            <person name="Henderson S.N."/>
            <person name="Sutton G.G."/>
            <person name="Wortman J.R."/>
            <person name="Yandell M.D."/>
            <person name="Zhang Q."/>
            <person name="Chen L.X."/>
            <person name="Brandon R.C."/>
            <person name="Rogers Y.-H.C."/>
            <person name="Blazej R.G."/>
            <person name="Champe M."/>
            <person name="Pfeiffer B.D."/>
            <person name="Wan K.H."/>
            <person name="Doyle C."/>
            <person name="Baxter E.G."/>
            <person name="Helt G."/>
            <person name="Nelson C.R."/>
            <person name="Miklos G.L.G."/>
            <person name="Abril J.F."/>
            <person name="Agbayani A."/>
            <person name="An H.-J."/>
            <person name="Andrews-Pfannkoch C."/>
            <person name="Baldwin D."/>
            <person name="Ballew R.M."/>
            <person name="Basu A."/>
            <person name="Baxendale J."/>
            <person name="Bayraktaroglu L."/>
            <person name="Beasley E.M."/>
            <person name="Beeson K.Y."/>
            <person name="Benos P.V."/>
            <person name="Berman B.P."/>
            <person name="Bhandari D."/>
            <person name="Bolshakov S."/>
            <person name="Borkova D."/>
            <person name="Botchan M.R."/>
            <person name="Bouck J."/>
            <person name="Brokstein P."/>
            <person name="Brottier P."/>
            <person name="Burtis K.C."/>
            <person name="Busam D.A."/>
            <person name="Butler H."/>
            <person name="Cadieu E."/>
            <person name="Center A."/>
            <person name="Chandra I."/>
            <person name="Cherry J.M."/>
            <person name="Cawley S."/>
            <person name="Dahlke C."/>
            <person name="Davenport L.B."/>
            <person name="Davies P."/>
            <person name="de Pablos B."/>
            <person name="Delcher A."/>
            <person name="Deng Z."/>
            <person name="Mays A.D."/>
            <person name="Dew I."/>
            <person name="Dietz S.M."/>
            <person name="Dodson K."/>
            <person name="Doup L.E."/>
            <person name="Downes M."/>
            <person name="Dugan-Rocha S."/>
            <person name="Dunkov B.C."/>
            <person name="Dunn P."/>
            <person name="Durbin K.J."/>
            <person name="Evangelista C.C."/>
            <person name="Ferraz C."/>
            <person name="Ferriera S."/>
            <person name="Fleischmann W."/>
            <person name="Fosler C."/>
            <person name="Gabrielian A.E."/>
            <person name="Garg N.S."/>
            <person name="Gelbart W.M."/>
            <person name="Glasser K."/>
            <person name="Glodek A."/>
            <person name="Gong F."/>
            <person name="Gorrell J.H."/>
            <person name="Gu Z."/>
            <person name="Guan P."/>
            <person name="Harris M."/>
            <person name="Harris N.L."/>
            <person name="Harvey D.A."/>
            <person name="Heiman T.J."/>
            <person name="Hernandez J.R."/>
            <person name="Houck J."/>
            <person name="Hostin D."/>
            <person name="Houston K.A."/>
            <person name="Howland T.J."/>
            <person name="Wei M.-H."/>
            <person name="Ibegwam C."/>
            <person name="Jalali M."/>
            <person name="Kalush F."/>
            <person name="Karpen G.H."/>
            <person name="Ke Z."/>
            <person name="Kennison J.A."/>
            <person name="Ketchum K.A."/>
            <person name="Kimmel B.E."/>
            <person name="Kodira C.D."/>
            <person name="Kraft C.L."/>
            <person name="Kravitz S."/>
            <person name="Kulp D."/>
            <person name="Lai Z."/>
            <person name="Lasko P."/>
            <person name="Lei Y."/>
            <person name="Levitsky A.A."/>
            <person name="Li J.H."/>
            <person name="Li Z."/>
            <person name="Liang Y."/>
            <person name="Lin X."/>
            <person name="Liu X."/>
            <person name="Mattei B."/>
            <person name="McIntosh T.C."/>
            <person name="McLeod M.P."/>
            <person name="McPherson D."/>
            <person name="Merkulov G."/>
            <person name="Milshina N.V."/>
            <person name="Mobarry C."/>
            <person name="Morris J."/>
            <person name="Moshrefi A."/>
            <person name="Mount S.M."/>
            <person name="Moy M."/>
            <person name="Murphy B."/>
            <person name="Murphy L."/>
            <person name="Muzny D.M."/>
            <person name="Nelson D.L."/>
            <person name="Nelson D.R."/>
            <person name="Nelson K.A."/>
            <person name="Nixon K."/>
            <person name="Nusskern D.R."/>
            <person name="Pacleb J.M."/>
            <person name="Palazzolo M."/>
            <person name="Pittman G.S."/>
            <person name="Pan S."/>
            <person name="Pollard J."/>
            <person name="Puri V."/>
            <person name="Reese M.G."/>
            <person name="Reinert K."/>
            <person name="Remington K."/>
            <person name="Saunders R.D.C."/>
            <person name="Scheeler F."/>
            <person name="Shen H."/>
            <person name="Shue B.C."/>
            <person name="Siden-Kiamos I."/>
            <person name="Simpson M."/>
            <person name="Skupski M.P."/>
            <person name="Smith T.J."/>
            <person name="Spier E."/>
            <person name="Spradling A.C."/>
            <person name="Stapleton M."/>
            <person name="Strong R."/>
            <person name="Sun E."/>
            <person name="Svirskas R."/>
            <person name="Tector C."/>
            <person name="Turner R."/>
            <person name="Venter E."/>
            <person name="Wang A.H."/>
            <person name="Wang X."/>
            <person name="Wang Z.-Y."/>
            <person name="Wassarman D.A."/>
            <person name="Weinstock G.M."/>
            <person name="Weissenbach J."/>
            <person name="Williams S.M."/>
            <person name="Woodage T."/>
            <person name="Worley K.C."/>
            <person name="Wu D."/>
            <person name="Yang S."/>
            <person name="Yao Q.A."/>
            <person name="Ye J."/>
            <person name="Yeh R.-F."/>
            <person name="Zaveri J.S."/>
            <person name="Zhan M."/>
            <person name="Zhang G."/>
            <person name="Zhao Q."/>
            <person name="Zheng L."/>
            <person name="Zheng X.H."/>
            <person name="Zhong F.N."/>
            <person name="Zhong W."/>
            <person name="Zhou X."/>
            <person name="Zhu S.C."/>
            <person name="Zhu X."/>
            <person name="Smith H.O."/>
            <person name="Gibbs R.A."/>
            <person name="Myers E.W."/>
            <person name="Rubin G.M."/>
            <person name="Venter J.C."/>
        </authorList>
    </citation>
    <scope>NUCLEOTIDE SEQUENCE [LARGE SCALE GENOMIC DNA]</scope>
    <source>
        <strain>Berkeley</strain>
    </source>
</reference>
<reference key="4">
    <citation type="journal article" date="2002" name="Genome Biol.">
        <title>Annotation of the Drosophila melanogaster euchromatic genome: a systematic review.</title>
        <authorList>
            <person name="Misra S."/>
            <person name="Crosby M.A."/>
            <person name="Mungall C.J."/>
            <person name="Matthews B.B."/>
            <person name="Campbell K.S."/>
            <person name="Hradecky P."/>
            <person name="Huang Y."/>
            <person name="Kaminker J.S."/>
            <person name="Millburn G.H."/>
            <person name="Prochnik S.E."/>
            <person name="Smith C.D."/>
            <person name="Tupy J.L."/>
            <person name="Whitfield E.J."/>
            <person name="Bayraktaroglu L."/>
            <person name="Berman B.P."/>
            <person name="Bettencourt B.R."/>
            <person name="Celniker S.E."/>
            <person name="de Grey A.D.N.J."/>
            <person name="Drysdale R.A."/>
            <person name="Harris N.L."/>
            <person name="Richter J."/>
            <person name="Russo S."/>
            <person name="Schroeder A.J."/>
            <person name="Shu S.Q."/>
            <person name="Stapleton M."/>
            <person name="Yamada C."/>
            <person name="Ashburner M."/>
            <person name="Gelbart W.M."/>
            <person name="Rubin G.M."/>
            <person name="Lewis S.E."/>
        </authorList>
    </citation>
    <scope>GENOME REANNOTATION</scope>
    <scope>ALTERNATIVE SPLICING</scope>
    <source>
        <strain>Berkeley</strain>
    </source>
</reference>
<reference key="5">
    <citation type="submission" date="2010-03" db="EMBL/GenBank/DDBJ databases">
        <authorList>
            <person name="Stapleton M."/>
            <person name="Brokstein P."/>
            <person name="Hong L."/>
            <person name="Agbayani A."/>
            <person name="Carlson J.W."/>
            <person name="Booth B."/>
            <person name="Champe M."/>
            <person name="Chavez C."/>
            <person name="Dorsett V."/>
            <person name="Dresnek D."/>
            <person name="Farfan D."/>
            <person name="Frise E."/>
            <person name="George R.A."/>
            <person name="Gonzalez M."/>
            <person name="Guarin H."/>
            <person name="Kronmiller B."/>
            <person name="Li P.W."/>
            <person name="Liao G."/>
            <person name="Miranda A."/>
            <person name="Mungall C.J."/>
            <person name="Nunoo J."/>
            <person name="Pacleb J.M."/>
            <person name="Paragas V."/>
            <person name="Park S."/>
            <person name="Patel S."/>
            <person name="Phouanenavong S."/>
            <person name="Wan K.H."/>
            <person name="Yu C."/>
            <person name="Lewis S.E."/>
            <person name="Rubin G.M."/>
            <person name="Celniker S.E."/>
        </authorList>
    </citation>
    <scope>NUCLEOTIDE SEQUENCE [LARGE SCALE MRNA] (ISOFORMS A; W; MS16 AND V)</scope>
    <source>
        <strain>Berkeley</strain>
        <tissue>Embryo</tissue>
        <tissue>Head</tissue>
    </source>
</reference>
<reference key="6">
    <citation type="journal article" date="1992" name="Cell">
        <title>The primary sex determination signal of Drosophila acts at the level of transcription.</title>
        <authorList>
            <person name="Keyes L.N."/>
            <person name="Cline T.W."/>
            <person name="Schedl P."/>
        </authorList>
    </citation>
    <scope>NUCLEOTIDE SEQUENCE [GENOMIC DNA] OF 1-26 (ISOFORM 1)</scope>
    <scope>FUNCTION</scope>
    <scope>TISSUE SPECIFICITY</scope>
    <scope>DEVELOPMENTAL STAGE</scope>
    <source>
        <tissue>Embryo</tissue>
    </source>
</reference>
<reference key="7">
    <citation type="journal article" date="1996" name="Genetics">
        <title>Regulation of the gene Sex-lethal: a comparative analysis of Drosophila melanogaster and Drosophila subobscura.</title>
        <authorList>
            <person name="Penalva L.O.F."/>
            <person name="Sakamoto H."/>
            <person name="Navarro-Sabate A."/>
            <person name="Sakashita E."/>
            <person name="Granadino B."/>
            <person name="Segarra C."/>
            <person name="Sanchez L."/>
        </authorList>
    </citation>
    <scope>NUCLEOTIDE SEQUENCE [GENOMIC DNA] OF 1-41 (ISOFORM MS3)</scope>
</reference>
<reference key="8">
    <citation type="journal article" date="1989" name="Cell">
        <title>Sex-specific alternative splicing of RNA from the transformer gene results from sequence-dependent splice site blockage.</title>
        <authorList>
            <person name="Sosnowski B.A."/>
            <person name="Belote J.M."/>
            <person name="McKeown M."/>
        </authorList>
    </citation>
    <scope>FUNCTION</scope>
</reference>
<reference key="9">
    <citation type="journal article" date="1990" name="Nature">
        <title>Binding of the Drosophila sex-lethal gene product to the alternative splice site of transformer primary transcript.</title>
        <authorList>
            <person name="Inoue K."/>
            <person name="Hoshijima K."/>
            <person name="Sakamoto H."/>
            <person name="Shimura Y."/>
        </authorList>
    </citation>
    <scope>FUNCTION</scope>
</reference>
<reference key="10">
    <citation type="journal article" date="1992" name="Nucleic Acids Res.">
        <title>Control of Drosophila Sex-lethal pre-mRNA splicing by its own female-specific product.</title>
        <authorList>
            <person name="Sakamoto H."/>
            <person name="Inoue K."/>
            <person name="Higuchi I."/>
            <person name="Ono Y."/>
            <person name="Shimura Y."/>
        </authorList>
    </citation>
    <scope>ALTERNATIVE SPLICING</scope>
</reference>
<reference key="11">
    <citation type="journal article" date="1993" name="Nature">
        <title>The protein Sex-lethal antagonizes the splicing factor U2AF to regulate alternative splicing of transformer pre-mRNA.</title>
        <authorList>
            <person name="Valcarcel J."/>
            <person name="Singh R."/>
            <person name="Zamore P.D."/>
            <person name="Green M.R."/>
        </authorList>
    </citation>
    <scope>FUNCTION</scope>
</reference>
<reference key="12">
    <citation type="journal article" date="1994" name="Mol. Cell. Biol.">
        <title>RNA binding by Sxl proteins in vitro and in vivo.</title>
        <authorList>
            <person name="Samuels M.E."/>
            <person name="Bopp D."/>
            <person name="Colvin R.A."/>
            <person name="Roscigno R.F."/>
            <person name="Garcia-Blanco M.A."/>
            <person name="Schedl P."/>
        </authorList>
    </citation>
    <scope>FUNCTION</scope>
    <scope>SUBCELLULAR LOCATION</scope>
</reference>
<reference key="13">
    <citation type="journal article" date="1997" name="Cell">
        <title>The regulation of the Drosophila msl-2 gene reveals a function for Sex-lethal in translational control.</title>
        <authorList>
            <person name="Bashaw G.J."/>
            <person name="Baker B.S."/>
        </authorList>
    </citation>
    <scope>FUNCTION</scope>
    <scope>SUBCELLULAR LOCATION</scope>
</reference>
<reference key="14">
    <citation type="journal article" date="1997" name="Nature">
        <title>Sex lethal controls dosage compensation in Drosophila by a non-splicing mechanism.</title>
        <authorList>
            <person name="Kelley R.L."/>
            <person name="Wang J."/>
            <person name="Bell L."/>
            <person name="Kuroda M.I."/>
        </authorList>
    </citation>
    <scope>FUNCTION</scope>
</reference>
<reference key="15">
    <citation type="journal article" date="1999" name="EMBO J.">
        <title>Translational control of dosage compensation in Drosophila by Sex-lethal: cooperative silencing via the 5' and 3' UTRs of msl-2 mRNA is independent of the poly(A) tail.</title>
        <authorList>
            <person name="Gebauer F."/>
            <person name="Corona D.F."/>
            <person name="Preiss T."/>
            <person name="Becker P.B."/>
            <person name="Hentze M.W."/>
        </authorList>
    </citation>
    <scope>FUNCTION</scope>
</reference>
<reference key="16">
    <citation type="journal article" date="1999" name="Nature">
        <title>Inhibition of msl-2 splicing by Sex-lethal reveals interaction between U2AF35 and the 3' splice site AG.</title>
        <authorList>
            <person name="Merendino L."/>
            <person name="Guth S."/>
            <person name="Bilbao D."/>
            <person name="Martinez C."/>
            <person name="Valcarcel J."/>
        </authorList>
    </citation>
    <scope>FUNCTION</scope>
</reference>
<reference key="17">
    <citation type="journal article" date="2003" name="J. Biol. Chem.">
        <title>Biochemical function of female-lethal (2)D/Wilms' tumor suppressor-1-associated proteins in alternative pre-mRNA splicing.</title>
        <authorList>
            <person name="Ortega A."/>
            <person name="Niksic M."/>
            <person name="Bachi A."/>
            <person name="Wilm M."/>
            <person name="Sanchez L."/>
            <person name="Hastie N."/>
            <person name="Valcarcel J."/>
        </authorList>
    </citation>
    <scope>IDENTIFICATION IN COMPLEX WITH FL(2)D AND VIR</scope>
</reference>
<reference key="18">
    <citation type="journal article" date="2003" name="EMBO J.">
        <title>A co-repressor assembly nucleated by Sex-lethal in the 3'UTR mediates translational control of Drosophila msl-2 mRNA.</title>
        <authorList>
            <person name="Grskovic M."/>
            <person name="Hentze M.W."/>
            <person name="Gebauer F."/>
        </authorList>
    </citation>
    <scope>FUNCTION</scope>
</reference>
<reference key="19">
    <citation type="journal article" date="2003" name="Mol. Cell">
        <title>Drosophila sex-lethal inhibits the stable association of the 40S ribosomal subunit with msl-2 mRNA.</title>
        <authorList>
            <person name="Gebauer F."/>
            <person name="Grskovic M."/>
            <person name="Hentze M.W."/>
        </authorList>
    </citation>
    <scope>FUNCTION</scope>
</reference>
<reference key="20">
    <citation type="journal article" date="2005" name="Cell">
        <title>A dual inhibitory mechanism restricts msl-2 mRNA translation for dosage compensation in Drosophila.</title>
        <authorList>
            <person name="Beckmann K."/>
            <person name="Grskovic M."/>
            <person name="Gebauer F."/>
            <person name="Hentze M.W."/>
        </authorList>
    </citation>
    <scope>FUNCTION</scope>
</reference>
<reference key="21">
    <citation type="journal article" date="2006" name="Genes Dev.">
        <title>Sex-lethal imparts a sex-specific function to UNR by recruiting it to the msl-2 mRNA 3' UTR: translational repression for dosage compensation.</title>
        <authorList>
            <person name="Duncan K."/>
            <person name="Grskovic M."/>
            <person name="Strein C."/>
            <person name="Beckmann K."/>
            <person name="Niggeweg R."/>
            <person name="Abaza I."/>
            <person name="Gebauer F."/>
            <person name="Wilm M."/>
            <person name="Hentze M.W."/>
        </authorList>
    </citation>
    <scope>FUNCTION</scope>
    <scope>INTERACTION WITH UNR</scope>
</reference>
<reference key="22">
    <citation type="journal article" date="2006" name="Genes Dev.">
        <title>Drosophila UNR is required for translational repression of male-specific lethal 2 mRNA during regulation of X-chromosome dosage compensation.</title>
        <authorList>
            <person name="Abaza I."/>
            <person name="Coll O."/>
            <person name="Patalano S."/>
            <person name="Gebauer F."/>
        </authorList>
    </citation>
    <scope>FUNCTION</scope>
    <scope>INTERACTION WITH UNR</scope>
</reference>
<reference key="23">
    <citation type="journal article" date="2008" name="RNA">
        <title>Functional domains of Drosophila UNR in translational control.</title>
        <authorList>
            <person name="Abaza I."/>
            <person name="Gebauer F."/>
        </authorList>
    </citation>
    <scope>INTERACTION WITH UNR</scope>
</reference>
<reference key="24">
    <citation type="journal article" date="2013" name="Genes Dev.">
        <title>Sex-lethal promotes nuclear retention of msl2 mRNA via interactions with the STAR protein HOW.</title>
        <authorList>
            <person name="Graindorge A."/>
            <person name="Carre C."/>
            <person name="Gebauer F."/>
        </authorList>
    </citation>
    <scope>FUNCTION</scope>
    <scope>INTERACTION WITH HOW</scope>
</reference>
<reference key="25">
    <citation type="journal article" date="2015" name="Proc. Natl. Acad. Sci. U.S.A.">
        <title>spenito is required for sex determination in Drosophila melanogaster.</title>
        <authorList>
            <person name="Yan D."/>
            <person name="Perrimon N."/>
        </authorList>
    </citation>
    <scope>INTERACTION WITH NITO</scope>
</reference>
<reference key="26">
    <citation type="journal article" date="2009" name="Mol. Cell">
        <title>The SXL-UNR corepressor complex uses a PABP-mediated mechanism to inhibit ribosome recruitment to msl-2 mRNA.</title>
        <authorList>
            <person name="Duncan K.E."/>
            <person name="Strein C."/>
            <person name="Hentze M.W."/>
        </authorList>
    </citation>
    <scope>FUNCTION</scope>
    <scope>INTERACTION WITH UNR</scope>
</reference>
<reference key="27">
    <citation type="journal article" date="2013" name="PLoS ONE">
        <title>Mei-p26 cooperates with Bam, Bgcn and Sxl to promote early germline development in the Drosophila ovary.</title>
        <authorList>
            <person name="Li Y."/>
            <person name="Zhang Q."/>
            <person name="Carreira-Rosario A."/>
            <person name="Maines J.Z."/>
            <person name="McKearin D.M."/>
            <person name="Buszczak M."/>
        </authorList>
    </citation>
    <scope>FUNCTION</scope>
    <scope>IDENTIFICATION IN MEI-P26-BAM-BGCN-SXL COMPLEX</scope>
    <scope>INTERACTION WITH MEI-P26</scope>
    <scope>TISSUE SPECIFICITY</scope>
</reference>
<reference key="28">
    <citation type="journal article" date="1994" name="Biochemistry">
        <title>Resonance assignments and solution structure of the second RNA-binding domain of sex-lethal determined by multidimensional heteronuclear magnetic resonance.</title>
        <authorList>
            <person name="Lee A.L."/>
            <person name="Kanaar R."/>
            <person name="Rio D.C."/>
            <person name="Wemmer D.E."/>
        </authorList>
    </citation>
    <scope>STRUCTURE BY NMR OF 199-294</scope>
</reference>
<reference key="29">
    <citation type="journal article" date="1997" name="J. Mol. Biol.">
        <title>A characteristic arrangement of aromatic amino acid residues in the solution structure of the amino-terminal RNA-binding domain of Drosophila sex-lethal.</title>
        <authorList>
            <person name="Inoue M."/>
            <person name="Muto Y."/>
            <person name="Sakamoto H."/>
            <person name="Kigawa T."/>
            <person name="Takio K."/>
            <person name="Shimura Y."/>
            <person name="Yokoyama S."/>
        </authorList>
    </citation>
    <scope>STRUCTURE BY NMR OF 122-209</scope>
</reference>
<reference key="30">
    <citation type="journal article" date="1999" name="Nature">
        <title>Structural basis for recognition of the tra mRNA precursor by the Sex-lethal protein.</title>
        <authorList>
            <person name="Handa N."/>
            <person name="Nureki O."/>
            <person name="Kurimoto K."/>
            <person name="Kim I."/>
            <person name="Sakamoto H."/>
            <person name="Shimura Y."/>
            <person name="Muto Y."/>
            <person name="Yokoyama S."/>
        </authorList>
    </citation>
    <scope>X-RAY CRYSTALLOGRAPHY (2.6 ANGSTROMS) OF 122-289</scope>
    <scope>FUNCTION</scope>
    <scope>RNA-BINDING</scope>
</reference>
<reference evidence="33" key="31">
    <citation type="journal article" date="2014" name="Nature">
        <title>Structural basis for the assembly of the Sxl-Unr translation regulatory complex.</title>
        <authorList>
            <person name="Hennig J."/>
            <person name="Militti C."/>
            <person name="Popowicz G.M."/>
            <person name="Wang I."/>
            <person name="Sonntag M."/>
            <person name="Geerlof A."/>
            <person name="Gabel F."/>
            <person name="Gebauer F."/>
            <person name="Sattler M."/>
        </authorList>
    </citation>
    <scope>X-RAY CRYSTALLOGRAPHY (2.80 ANGSTROMS) OF 122-294 IN COMPLEX WITH UNR AND MSL-2 MRNA</scope>
    <scope>FUNCTION</scope>
    <scope>INTERACTION WITH UNR</scope>
</reference>
<gene>
    <name evidence="28 31" type="primary">Sxl</name>
    <name type="synonym">Sx1</name>
    <name evidence="31" type="ORF">CG43770</name>
</gene>
<proteinExistence type="evidence at protein level"/>
<comment type="function">
    <text evidence="3 4 5 7 8 9 10 11 12 13 14 16 17 18 19 20 22 23 24 25 26">Sex determination switch protein, which controls sexual development and dosage compensation in females (PubMed:10617208, PubMed:1547493, PubMed:1690860, PubMed:1710769, PubMed:19941818, PubMed:2503251, PubMed:25209665, PubMed:3144435, PubMed:7680770). Sxl protein is only active in females: it is inactive in males throughout development (PubMed:1547493, PubMed:1710769, PubMed:3144435). Acts as a mRNA-binding protein, which specifically binds to a subset of pre-mRNAs and mRNAs and regulates their processing and/or translation (PubMed:10217141, PubMed:10617208, PubMed:1690860, PubMed:19941818, PubMed:2503251, PubMed:7516476, PubMed:7680770). Binds nanos mRNA and is involved in bam-bgcn mediated repression of nanos mRNA translation (PubMed:23526974). Promotes sexual development by controlling the female-specific alternative splicing of the transformer (tra) pre-mRNA: binds tightly to a characteristic uridine-rich polypyrimidine tract at the non-sex specific 3' splice site in one of the tra introns, preventing the general splicing factor U2AF from binding to this site and forcing it to bind to the female-specific 3' splice site (PubMed:10217141, PubMed:1690860, PubMed:2503251, PubMed:7680770). Acts as an inhibitor of dosage compensation in females by preventing production of msl-2 protein, an essential component of the MSL complex, the complex that mediates X-chromosome dosage compensation (PubMed:10545124, PubMed:10617208, PubMed:12769862, PubMed:16452508, PubMed:16452509, PubMed:19941818, PubMed:23788626, PubMed:25209665, PubMed:9144292, PubMed:9182767). Specifically binds to uridine stretches in both the 5'- and 3'-UTR of msl-2 transcripts (PubMed:10545124, PubMed:10617208, PubMed:12769862, PubMed:14532129, PubMed:16122421, PubMed:25209665, PubMed:9144292, PubMed:9182767). Sxl first acts at the splicing level by promoting retention of an intron in the 5' UTR of msl-2 pre-mRNA (PubMed:10617208). The retained intron contains Sxl-binding sites that are required for subsequent steps of repression: after msl-2 mRNA export into the cytoplasm, Sxl coordinates its translational repression by targeting early steps of translation initiation (PubMed:10545124, PubMed:12769862, PubMed:14532129, PubMed:16122421, PubMed:16452508, PubMed:16452509, PubMed:19941818, PubMed:9144292, PubMed:9182767). Together with how, Sxl also prevents production of msl-2 protein by preventing nuclear export of msl-2 transcripts (PubMed:23788626).</text>
</comment>
<comment type="function">
    <molecule>Isoform 1</molecule>
    <text evidence="9">Embryo-specific product, which is expressed early only in female embryos and specifies female-adult specific splicing.</text>
</comment>
<comment type="subunit">
    <text evidence="6 11 12 15 16 17 18 20 21">Part of a complex containing fl(2)d, Sxl and vir (PubMed:12444081). Part of a complex composed of at least mei-P26, bam, bgcn and Sxl; this complex is involved in translational repression of nanos mRNA (PubMed:23526974). interacts with mei-p26 (PubMed:23526974). Interacts with nito (PubMed:26324914). Interacts with Unr; cooperates with Unr to prevent translation of msl-2 transcripts (PubMed:16452508, PubMed:16452509, PubMed:18203923, PubMed:19941818, PubMed:25209665). Interacts with how; promoting nuclear retention of msl-2 transcripts (PubMed:23788626).</text>
</comment>
<comment type="interaction">
    <interactant intactId="EBI-16120780">
        <id>P19339-1</id>
    </interactant>
    <interactant intactId="EBI-194879">
        <id>B7Z0E2</id>
        <label>Unr</label>
    </interactant>
    <organismsDiffer>false</organismsDiffer>
    <experiments>8</experiments>
</comment>
<comment type="subcellular location">
    <subcellularLocation>
        <location evidence="23">Nucleus</location>
    </subcellularLocation>
    <subcellularLocation>
        <location evidence="26">Cytoplasm</location>
    </subcellularLocation>
</comment>
<comment type="alternative products">
    <event type="alternative splicing"/>
    <isoform>
        <id>P19339-1</id>
        <name>MS3</name>
        <name>CF1</name>
        <name>D</name>
        <name>female-specific</name>
        <name>L</name>
        <name>T</name>
        <sequence type="displayed"/>
    </isoform>
    <isoform>
        <id>P19339-2</id>
        <name>1</name>
        <sequence type="described" ref="VSP_005881"/>
    </isoform>
    <isoform>
        <id>P19339-10</id>
        <name>A</name>
        <name>E</name>
        <name>U</name>
        <sequence type="described" ref="VSP_019287 VSP_005883"/>
    </isoform>
    <isoform>
        <id>P19339-8</id>
        <name>C</name>
        <name>N</name>
        <sequence type="described" ref="VSP_005881 VSP_005883"/>
    </isoform>
    <isoform>
        <id>P19339-3</id>
        <name>CM1</name>
        <name>B</name>
        <name>F</name>
        <name>M</name>
        <sequence type="described" ref="VSP_005882 VSP_005884"/>
    </isoform>
    <isoform>
        <id>P19339-7</id>
        <name>G</name>
        <name>J</name>
        <sequence type="described" ref="VSP_005883"/>
    </isoform>
    <isoform>
        <id>P19339-9</id>
        <name>W</name>
        <sequence type="described" ref="VSP_005883 VSP_005886"/>
    </isoform>
    <isoform>
        <id>P19339-11</id>
        <name>K</name>
        <name>Q</name>
        <sequence type="described" ref="VSP_019289 VSP_019290"/>
    </isoform>
    <isoform>
        <id>P19339-4</id>
        <name>MS11</name>
        <name>H</name>
        <sequence type="described" ref="VSP_005883 VSP_005885"/>
    </isoform>
    <isoform>
        <id>P19339-5</id>
        <name>MS16</name>
        <name>P</name>
        <sequence type="described" ref="VSP_005886"/>
    </isoform>
    <isoform>
        <id>P19339-6</id>
        <name>O</name>
        <sequence type="described" ref="VSP_005881 VSP_005883 VSP_005885"/>
    </isoform>
    <isoform>
        <id>P19339-12</id>
        <name>R</name>
        <sequence type="described" ref="VSP_005881 VSP_005883 VSP_005886"/>
    </isoform>
    <isoform>
        <id>P19339-13</id>
        <name>S</name>
        <sequence type="described" ref="VSP_019287"/>
    </isoform>
    <isoform>
        <id>P19339-14</id>
        <name>V</name>
        <sequence type="described" ref="VSP_040526"/>
    </isoform>
    <text>Additional isoforms seem to exist.</text>
</comment>
<comment type="tissue specificity">
    <text evidence="9 17">Expressed in somatic tissues, but not in the pole cells, which are the precursors of the germline (PubMed:1547493). Expressed in the anterior of the germarium (PubMed:23526974).</text>
</comment>
<comment type="developmental stage">
    <molecule>Isoform 1</molecule>
    <text evidence="9">Embryo-specific (PubMed:1547493). Expressed for a brief period during the syncytial blastoderm stage (PubMed:1547493). Expression is under the control of primary sex-determining signal, which depends on the ratio of X chromosomes relative to autosomes (X:A ratio) (PubMed:1547493). Expression occurs in 2X:2A cells, but not in X:2A cells (PubMed:1547493). The X:A ratio seems to be signaled by the relative concentration of the X-linked transcription factors SIS-A and SIS-B (PubMed:1547493). As a result, the embryo-specific product is expressed early only in female embryos and specifies female-adult specific splicing; in the male where it is not expressed, the default splicing gives rise to a truncated non-functional protein (PubMed:1547493).</text>
</comment>
<comment type="developmental stage">
    <molecule>Isoform CM1</molecule>
    <text evidence="22">Male-specific.</text>
</comment>
<comment type="developmental stage">
    <molecule>Isoform MS3</molecule>
    <text evidence="14 22">Female specific.</text>
</comment>
<comment type="developmental stage">
    <molecule>Isoform MS11</molecule>
    <text evidence="14">Female specific (PubMed:1710769). Isoform MS11 is expressed in 4-7 hours embryo (PubMed:1710769).</text>
</comment>
<comment type="developmental stage">
    <molecule>Isoform MS16</molecule>
    <text evidence="14">Female specific.</text>
</comment>